<keyword id="KW-0449">Lipoprotein</keyword>
<keyword id="KW-0472">Membrane</keyword>
<keyword id="KW-0479">Metal-binding</keyword>
<keyword id="KW-0496">Mitochondrion</keyword>
<keyword id="KW-1000">Mitochondrion outer membrane</keyword>
<keyword id="KW-0500">Molybdenum</keyword>
<keyword id="KW-0519">Myristate</keyword>
<keyword id="KW-0560">Oxidoreductase</keyword>
<keyword id="KW-1185">Reference proteome</keyword>
<keyword id="KW-0735">Signal-anchor</keyword>
<keyword id="KW-0812">Transmembrane</keyword>
<keyword id="KW-1133">Transmembrane helix</keyword>
<gene>
    <name type="primary">Mtarc1</name>
    <name evidence="6" type="synonym">Marc1</name>
    <name type="synonym">Mosc1</name>
</gene>
<name>MARC1_MOUSE</name>
<dbReference type="EC" id="1.7.-.-" evidence="2"/>
<dbReference type="EMBL" id="AK004989">
    <property type="protein sequence ID" value="BAB23724.1"/>
    <property type="status" value="ALT_FRAME"/>
    <property type="molecule type" value="mRNA"/>
</dbReference>
<dbReference type="EMBL" id="BC028441">
    <property type="protein sequence ID" value="AAH28441.1"/>
    <property type="status" value="ALT_INIT"/>
    <property type="molecule type" value="mRNA"/>
</dbReference>
<dbReference type="CCDS" id="CCDS69987.1"/>
<dbReference type="RefSeq" id="NP_001277202.1">
    <property type="nucleotide sequence ID" value="NM_001290273.1"/>
</dbReference>
<dbReference type="SMR" id="Q9CW42"/>
<dbReference type="FunCoup" id="Q9CW42">
    <property type="interactions" value="267"/>
</dbReference>
<dbReference type="STRING" id="10090.ENSMUSP00000035804"/>
<dbReference type="GlyGen" id="Q9CW42">
    <property type="glycosylation" value="2 sites, 1 O-linked glycan (1 site)"/>
</dbReference>
<dbReference type="iPTMnet" id="Q9CW42"/>
<dbReference type="PhosphoSitePlus" id="Q9CW42"/>
<dbReference type="SwissPalm" id="Q9CW42"/>
<dbReference type="jPOST" id="Q9CW42"/>
<dbReference type="PaxDb" id="10090-ENSMUSP00000035804"/>
<dbReference type="ProteomicsDB" id="287310"/>
<dbReference type="Ensembl" id="ENSMUST00000048462.13">
    <property type="protein sequence ID" value="ENSMUSP00000035804.7"/>
    <property type="gene ID" value="ENSMUSG00000026621.15"/>
</dbReference>
<dbReference type="GeneID" id="66112"/>
<dbReference type="KEGG" id="mmu:66112"/>
<dbReference type="UCSC" id="uc007dyp.2">
    <property type="organism name" value="mouse"/>
</dbReference>
<dbReference type="AGR" id="MGI:1913362"/>
<dbReference type="CTD" id="64757"/>
<dbReference type="MGI" id="MGI:1913362">
    <property type="gene designation" value="Mtarc1"/>
</dbReference>
<dbReference type="VEuPathDB" id="HostDB:ENSMUSG00000026621"/>
<dbReference type="eggNOG" id="KOG2362">
    <property type="taxonomic scope" value="Eukaryota"/>
</dbReference>
<dbReference type="GeneTree" id="ENSGT00940000162410"/>
<dbReference type="HOGENOM" id="CLU_028286_6_0_1"/>
<dbReference type="InParanoid" id="Q9CW42"/>
<dbReference type="OrthoDB" id="17255at2759"/>
<dbReference type="Reactome" id="R-MMU-211945">
    <property type="pathway name" value="Phase I - Functionalization of compounds"/>
</dbReference>
<dbReference type="BioGRID-ORCS" id="66112">
    <property type="hits" value="0 hits in 12 CRISPR screens"/>
</dbReference>
<dbReference type="ChiTaRS" id="Marc2">
    <property type="organism name" value="mouse"/>
</dbReference>
<dbReference type="PRO" id="PR:Q9CW42"/>
<dbReference type="Proteomes" id="UP000000589">
    <property type="component" value="Chromosome 1"/>
</dbReference>
<dbReference type="RNAct" id="Q9CW42">
    <property type="molecule type" value="protein"/>
</dbReference>
<dbReference type="Bgee" id="ENSMUSG00000026621">
    <property type="expression patterns" value="Expressed in left lobe of liver and 65 other cell types or tissues"/>
</dbReference>
<dbReference type="ExpressionAtlas" id="Q9CW42">
    <property type="expression patterns" value="baseline and differential"/>
</dbReference>
<dbReference type="GO" id="GO:0005743">
    <property type="term" value="C:mitochondrial inner membrane"/>
    <property type="evidence" value="ECO:0007005"/>
    <property type="project" value="MGI"/>
</dbReference>
<dbReference type="GO" id="GO:0005741">
    <property type="term" value="C:mitochondrial outer membrane"/>
    <property type="evidence" value="ECO:0007669"/>
    <property type="project" value="UniProtKB-SubCell"/>
</dbReference>
<dbReference type="GO" id="GO:0005739">
    <property type="term" value="C:mitochondrion"/>
    <property type="evidence" value="ECO:0000314"/>
    <property type="project" value="UniProtKB"/>
</dbReference>
<dbReference type="GO" id="GO:1903958">
    <property type="term" value="C:nitric-oxide synthase complex"/>
    <property type="evidence" value="ECO:0007669"/>
    <property type="project" value="Ensembl"/>
</dbReference>
<dbReference type="GO" id="GO:0030151">
    <property type="term" value="F:molybdenum ion binding"/>
    <property type="evidence" value="ECO:0000250"/>
    <property type="project" value="UniProtKB"/>
</dbReference>
<dbReference type="GO" id="GO:0043546">
    <property type="term" value="F:molybdopterin cofactor binding"/>
    <property type="evidence" value="ECO:0000250"/>
    <property type="project" value="UniProtKB"/>
</dbReference>
<dbReference type="GO" id="GO:0008940">
    <property type="term" value="F:nitrate reductase activity"/>
    <property type="evidence" value="ECO:0007669"/>
    <property type="project" value="Ensembl"/>
</dbReference>
<dbReference type="GO" id="GO:0050421">
    <property type="term" value="F:nitrite reductase (NO-forming) activity"/>
    <property type="evidence" value="ECO:0007669"/>
    <property type="project" value="Ensembl"/>
</dbReference>
<dbReference type="GO" id="GO:0030170">
    <property type="term" value="F:pyridoxal phosphate binding"/>
    <property type="evidence" value="ECO:0007669"/>
    <property type="project" value="InterPro"/>
</dbReference>
<dbReference type="GO" id="GO:0070458">
    <property type="term" value="P:cellular detoxification of nitrogen compound"/>
    <property type="evidence" value="ECO:0007669"/>
    <property type="project" value="Ensembl"/>
</dbReference>
<dbReference type="GO" id="GO:0042126">
    <property type="term" value="P:nitrate metabolic process"/>
    <property type="evidence" value="ECO:0007669"/>
    <property type="project" value="Ensembl"/>
</dbReference>
<dbReference type="GO" id="GO:0006809">
    <property type="term" value="P:nitric oxide biosynthetic process"/>
    <property type="evidence" value="ECO:0007669"/>
    <property type="project" value="Ensembl"/>
</dbReference>
<dbReference type="InterPro" id="IPR005302">
    <property type="entry name" value="MoCF_Sase_C"/>
</dbReference>
<dbReference type="InterPro" id="IPR005303">
    <property type="entry name" value="MOCOS_middle"/>
</dbReference>
<dbReference type="InterPro" id="IPR011037">
    <property type="entry name" value="Pyrv_Knase-like_insert_dom_sf"/>
</dbReference>
<dbReference type="PANTHER" id="PTHR14237:SF25">
    <property type="entry name" value="MITOCHONDRIAL AMIDOXIME-REDUCING COMPONENT 1"/>
    <property type="match status" value="1"/>
</dbReference>
<dbReference type="PANTHER" id="PTHR14237">
    <property type="entry name" value="MOLYBDOPTERIN COFACTOR SULFURASE MOSC"/>
    <property type="match status" value="1"/>
</dbReference>
<dbReference type="Pfam" id="PF03473">
    <property type="entry name" value="MOSC"/>
    <property type="match status" value="1"/>
</dbReference>
<dbReference type="Pfam" id="PF03476">
    <property type="entry name" value="MOSC_N"/>
    <property type="match status" value="1"/>
</dbReference>
<dbReference type="SUPFAM" id="SSF141673">
    <property type="entry name" value="MOSC N-terminal domain-like"/>
    <property type="match status" value="1"/>
</dbReference>
<dbReference type="SUPFAM" id="SSF50800">
    <property type="entry name" value="PK beta-barrel domain-like"/>
    <property type="match status" value="1"/>
</dbReference>
<dbReference type="PROSITE" id="PS51340">
    <property type="entry name" value="MOSC"/>
    <property type="match status" value="1"/>
</dbReference>
<feature type="initiator methionine" description="Removed" evidence="2">
    <location>
        <position position="1"/>
    </location>
</feature>
<feature type="chain" id="PRO_0000273336" description="Mitochondrial amidoxime-reducing component 1">
    <location>
        <begin position="2"/>
        <end position="340"/>
    </location>
</feature>
<feature type="topological domain" description="Mitochondrial matrix" evidence="1">
    <location>
        <begin position="2"/>
        <end position="24"/>
    </location>
</feature>
<feature type="transmembrane region" description="Helical; Signal-anchor for type II membrane protein" evidence="3">
    <location>
        <begin position="25"/>
        <end position="44"/>
    </location>
</feature>
<feature type="topological domain" description="Cytoplasmic" evidence="1">
    <location>
        <begin position="45"/>
        <end position="340"/>
    </location>
</feature>
<feature type="domain" description="MOSC" evidence="4">
    <location>
        <begin position="191"/>
        <end position="338"/>
    </location>
</feature>
<feature type="region of interest" description="MOSC N-terminal region" evidence="2">
    <location>
        <begin position="96"/>
        <end position="186"/>
    </location>
</feature>
<feature type="binding site" evidence="2">
    <location>
        <position position="70"/>
    </location>
    <ligand>
        <name>Mo-molybdopterin</name>
        <dbReference type="ChEBI" id="CHEBI:71302"/>
    </ligand>
</feature>
<feature type="binding site" evidence="2">
    <location>
        <position position="71"/>
    </location>
    <ligand>
        <name>Mo-molybdopterin</name>
        <dbReference type="ChEBI" id="CHEBI:71302"/>
    </ligand>
</feature>
<feature type="binding site" evidence="2">
    <location>
        <position position="95"/>
    </location>
    <ligand>
        <name>Mo-molybdopterin</name>
        <dbReference type="ChEBI" id="CHEBI:71302"/>
    </ligand>
</feature>
<feature type="binding site" evidence="2">
    <location>
        <position position="214"/>
    </location>
    <ligand>
        <name>Mo-molybdopterin</name>
        <dbReference type="ChEBI" id="CHEBI:71302"/>
    </ligand>
</feature>
<feature type="binding site" evidence="2">
    <location>
        <position position="241"/>
    </location>
    <ligand>
        <name>Mo-molybdopterin</name>
        <dbReference type="ChEBI" id="CHEBI:71302"/>
    </ligand>
</feature>
<feature type="binding site" evidence="2">
    <location>
        <position position="243"/>
    </location>
    <ligand>
        <name>Mo-molybdopterin</name>
        <dbReference type="ChEBI" id="CHEBI:71302"/>
    </ligand>
</feature>
<feature type="binding site" evidence="2">
    <location>
        <position position="274"/>
    </location>
    <ligand>
        <name>Mo-molybdopterin</name>
        <dbReference type="ChEBI" id="CHEBI:71302"/>
    </ligand>
</feature>
<feature type="binding site" evidence="2">
    <location>
        <position position="275"/>
    </location>
    <ligand>
        <name>Mo-molybdopterin</name>
        <dbReference type="ChEBI" id="CHEBI:71302"/>
    </ligand>
</feature>
<feature type="binding site" evidence="2">
    <location>
        <position position="276"/>
    </location>
    <ligand>
        <name>Mo-molybdopterin</name>
        <dbReference type="ChEBI" id="CHEBI:71302"/>
    </ligand>
    <ligandPart>
        <name>Mo</name>
        <dbReference type="ChEBI" id="CHEBI:28685"/>
    </ligandPart>
</feature>
<feature type="binding site" evidence="2">
    <location>
        <position position="320"/>
    </location>
    <ligand>
        <name>Mo-molybdopterin</name>
        <dbReference type="ChEBI" id="CHEBI:71302"/>
    </ligand>
</feature>
<feature type="lipid moiety-binding region" description="N-myristoyl glycine" evidence="2">
    <location>
        <position position="2"/>
    </location>
</feature>
<feature type="sequence conflict" description="In Ref. 2; AAH28441." evidence="5" ref="2">
    <original>V</original>
    <variation>I</variation>
    <location>
        <position position="251"/>
    </location>
</feature>
<comment type="function">
    <text evidence="2">Catalyzes the reduction of N-oxygenated molecules, acting as a counterpart of cytochrome P450 and flavin-containing monooxygenases in metabolic cycles. As a component of prodrug-converting system, reduces a multitude of N-hydroxylated prodrugs particularly amidoximes, leading to increased drug bioavailability. May be involved in mitochondrial N(omega)-hydroxy-L-arginine (NOHA) reduction, regulating endogenous nitric oxide levels and biosynthesis. Postulated to cleave the N-OH bond of N-hydroxylated substrates in concert with electron transfer from NADH to cytochrome b5 reductase then to cytochrome b5, the ultimate electron donor that primes the active site for substrate reduction.</text>
</comment>
<comment type="catalytic activity">
    <reaction evidence="2">
        <text>N(omega)-hydroxy-L-arginine + 2 Fe(II)-[cytochrome b5] + 2 H(+) = L-arginine + 2 Fe(III)-[cytochrome b5] + H2O</text>
        <dbReference type="Rhea" id="RHEA:61644"/>
        <dbReference type="Rhea" id="RHEA-COMP:10438"/>
        <dbReference type="Rhea" id="RHEA-COMP:10439"/>
        <dbReference type="ChEBI" id="CHEBI:15377"/>
        <dbReference type="ChEBI" id="CHEBI:15378"/>
        <dbReference type="ChEBI" id="CHEBI:29033"/>
        <dbReference type="ChEBI" id="CHEBI:29034"/>
        <dbReference type="ChEBI" id="CHEBI:32682"/>
        <dbReference type="ChEBI" id="CHEBI:60107"/>
    </reaction>
    <physiologicalReaction direction="left-to-right" evidence="2">
        <dbReference type="Rhea" id="RHEA:61645"/>
    </physiologicalReaction>
</comment>
<comment type="cofactor">
    <cofactor evidence="2">
        <name>Mo-molybdopterin</name>
        <dbReference type="ChEBI" id="CHEBI:71302"/>
    </cofactor>
    <text evidence="2">Binds 1 Mo-molybdopterin (Mo-MPT) cofactor per subunit.</text>
</comment>
<comment type="subunit">
    <text evidence="1">Component of a complex composed of cytochrome b5, NADH-cytochrome b5 reductase and MTARC1.</text>
</comment>
<comment type="subcellular location">
    <subcellularLocation>
        <location evidence="2">Mitochondrion outer membrane</location>
        <topology evidence="2">Single-pass type II membrane protein</topology>
    </subcellularLocation>
    <subcellularLocation>
        <location evidence="2">Membrane</location>
        <topology evidence="2">Lipid-anchor</topology>
    </subcellularLocation>
    <text evidence="2">Mitochondrial import is mediated by AA 1-40 and requires ATP.</text>
</comment>
<comment type="domain">
    <text evidence="2">Comprises two structural domains, the molybdenum cofactor/Moco sulfurase C-terminal (MOSC) domain and the MOSC N-terminal region, forming a cleft that accommodates Moco. The MOSC domain, which contains a large seven-stranded mostly antiparallel beta-barrel, engages multiple interactions with Moco both pterin ring and phosphate group, allowing for a tight coordination of Moco within the core of the enzyme.</text>
</comment>
<comment type="sequence caution" evidence="5">
    <conflict type="erroneous initiation">
        <sequence resource="EMBL-CDS" id="AAH28441"/>
    </conflict>
    <text>Truncated N-terminus.</text>
</comment>
<comment type="sequence caution" evidence="5">
    <conflict type="frameshift">
        <sequence resource="EMBL-CDS" id="BAB23724"/>
    </conflict>
</comment>
<reference key="1">
    <citation type="journal article" date="2005" name="Science">
        <title>The transcriptional landscape of the mammalian genome.</title>
        <authorList>
            <person name="Carninci P."/>
            <person name="Kasukawa T."/>
            <person name="Katayama S."/>
            <person name="Gough J."/>
            <person name="Frith M.C."/>
            <person name="Maeda N."/>
            <person name="Oyama R."/>
            <person name="Ravasi T."/>
            <person name="Lenhard B."/>
            <person name="Wells C."/>
            <person name="Kodzius R."/>
            <person name="Shimokawa K."/>
            <person name="Bajic V.B."/>
            <person name="Brenner S.E."/>
            <person name="Batalov S."/>
            <person name="Forrest A.R."/>
            <person name="Zavolan M."/>
            <person name="Davis M.J."/>
            <person name="Wilming L.G."/>
            <person name="Aidinis V."/>
            <person name="Allen J.E."/>
            <person name="Ambesi-Impiombato A."/>
            <person name="Apweiler R."/>
            <person name="Aturaliya R.N."/>
            <person name="Bailey T.L."/>
            <person name="Bansal M."/>
            <person name="Baxter L."/>
            <person name="Beisel K.W."/>
            <person name="Bersano T."/>
            <person name="Bono H."/>
            <person name="Chalk A.M."/>
            <person name="Chiu K.P."/>
            <person name="Choudhary V."/>
            <person name="Christoffels A."/>
            <person name="Clutterbuck D.R."/>
            <person name="Crowe M.L."/>
            <person name="Dalla E."/>
            <person name="Dalrymple B.P."/>
            <person name="de Bono B."/>
            <person name="Della Gatta G."/>
            <person name="di Bernardo D."/>
            <person name="Down T."/>
            <person name="Engstrom P."/>
            <person name="Fagiolini M."/>
            <person name="Faulkner G."/>
            <person name="Fletcher C.F."/>
            <person name="Fukushima T."/>
            <person name="Furuno M."/>
            <person name="Futaki S."/>
            <person name="Gariboldi M."/>
            <person name="Georgii-Hemming P."/>
            <person name="Gingeras T.R."/>
            <person name="Gojobori T."/>
            <person name="Green R.E."/>
            <person name="Gustincich S."/>
            <person name="Harbers M."/>
            <person name="Hayashi Y."/>
            <person name="Hensch T.K."/>
            <person name="Hirokawa N."/>
            <person name="Hill D."/>
            <person name="Huminiecki L."/>
            <person name="Iacono M."/>
            <person name="Ikeo K."/>
            <person name="Iwama A."/>
            <person name="Ishikawa T."/>
            <person name="Jakt M."/>
            <person name="Kanapin A."/>
            <person name="Katoh M."/>
            <person name="Kawasawa Y."/>
            <person name="Kelso J."/>
            <person name="Kitamura H."/>
            <person name="Kitano H."/>
            <person name="Kollias G."/>
            <person name="Krishnan S.P."/>
            <person name="Kruger A."/>
            <person name="Kummerfeld S.K."/>
            <person name="Kurochkin I.V."/>
            <person name="Lareau L.F."/>
            <person name="Lazarevic D."/>
            <person name="Lipovich L."/>
            <person name="Liu J."/>
            <person name="Liuni S."/>
            <person name="McWilliam S."/>
            <person name="Madan Babu M."/>
            <person name="Madera M."/>
            <person name="Marchionni L."/>
            <person name="Matsuda H."/>
            <person name="Matsuzawa S."/>
            <person name="Miki H."/>
            <person name="Mignone F."/>
            <person name="Miyake S."/>
            <person name="Morris K."/>
            <person name="Mottagui-Tabar S."/>
            <person name="Mulder N."/>
            <person name="Nakano N."/>
            <person name="Nakauchi H."/>
            <person name="Ng P."/>
            <person name="Nilsson R."/>
            <person name="Nishiguchi S."/>
            <person name="Nishikawa S."/>
            <person name="Nori F."/>
            <person name="Ohara O."/>
            <person name="Okazaki Y."/>
            <person name="Orlando V."/>
            <person name="Pang K.C."/>
            <person name="Pavan W.J."/>
            <person name="Pavesi G."/>
            <person name="Pesole G."/>
            <person name="Petrovsky N."/>
            <person name="Piazza S."/>
            <person name="Reed J."/>
            <person name="Reid J.F."/>
            <person name="Ring B.Z."/>
            <person name="Ringwald M."/>
            <person name="Rost B."/>
            <person name="Ruan Y."/>
            <person name="Salzberg S.L."/>
            <person name="Sandelin A."/>
            <person name="Schneider C."/>
            <person name="Schoenbach C."/>
            <person name="Sekiguchi K."/>
            <person name="Semple C.A."/>
            <person name="Seno S."/>
            <person name="Sessa L."/>
            <person name="Sheng Y."/>
            <person name="Shibata Y."/>
            <person name="Shimada H."/>
            <person name="Shimada K."/>
            <person name="Silva D."/>
            <person name="Sinclair B."/>
            <person name="Sperling S."/>
            <person name="Stupka E."/>
            <person name="Sugiura K."/>
            <person name="Sultana R."/>
            <person name="Takenaka Y."/>
            <person name="Taki K."/>
            <person name="Tammoja K."/>
            <person name="Tan S.L."/>
            <person name="Tang S."/>
            <person name="Taylor M.S."/>
            <person name="Tegner J."/>
            <person name="Teichmann S.A."/>
            <person name="Ueda H.R."/>
            <person name="van Nimwegen E."/>
            <person name="Verardo R."/>
            <person name="Wei C.L."/>
            <person name="Yagi K."/>
            <person name="Yamanishi H."/>
            <person name="Zabarovsky E."/>
            <person name="Zhu S."/>
            <person name="Zimmer A."/>
            <person name="Hide W."/>
            <person name="Bult C."/>
            <person name="Grimmond S.M."/>
            <person name="Teasdale R.D."/>
            <person name="Liu E.T."/>
            <person name="Brusic V."/>
            <person name="Quackenbush J."/>
            <person name="Wahlestedt C."/>
            <person name="Mattick J.S."/>
            <person name="Hume D.A."/>
            <person name="Kai C."/>
            <person name="Sasaki D."/>
            <person name="Tomaru Y."/>
            <person name="Fukuda S."/>
            <person name="Kanamori-Katayama M."/>
            <person name="Suzuki M."/>
            <person name="Aoki J."/>
            <person name="Arakawa T."/>
            <person name="Iida J."/>
            <person name="Imamura K."/>
            <person name="Itoh M."/>
            <person name="Kato T."/>
            <person name="Kawaji H."/>
            <person name="Kawagashira N."/>
            <person name="Kawashima T."/>
            <person name="Kojima M."/>
            <person name="Kondo S."/>
            <person name="Konno H."/>
            <person name="Nakano K."/>
            <person name="Ninomiya N."/>
            <person name="Nishio T."/>
            <person name="Okada M."/>
            <person name="Plessy C."/>
            <person name="Shibata K."/>
            <person name="Shiraki T."/>
            <person name="Suzuki S."/>
            <person name="Tagami M."/>
            <person name="Waki K."/>
            <person name="Watahiki A."/>
            <person name="Okamura-Oho Y."/>
            <person name="Suzuki H."/>
            <person name="Kawai J."/>
            <person name="Hayashizaki Y."/>
        </authorList>
    </citation>
    <scope>NUCLEOTIDE SEQUENCE [LARGE SCALE MRNA]</scope>
    <source>
        <strain>C57BL/6J</strain>
        <tissue>Liver</tissue>
        <tissue>Mammary gland</tissue>
    </source>
</reference>
<reference key="2">
    <citation type="journal article" date="2004" name="Genome Res.">
        <title>The status, quality, and expansion of the NIH full-length cDNA project: the Mammalian Gene Collection (MGC).</title>
        <authorList>
            <consortium name="The MGC Project Team"/>
        </authorList>
    </citation>
    <scope>NUCLEOTIDE SEQUENCE [LARGE SCALE MRNA] OF 161-340</scope>
    <source>
        <strain>C57BL/6J</strain>
        <tissue>Mammary gland</tissue>
    </source>
</reference>
<reference key="3">
    <citation type="journal article" date="2003" name="J. Biol. Chem.">
        <title>Proteomic analysis of the mouse liver mitochondrial inner membrane.</title>
        <authorList>
            <person name="Da Cruz S."/>
            <person name="Xenarios I."/>
            <person name="Langridge J."/>
            <person name="Vilbois F."/>
            <person name="Parone P.A."/>
            <person name="Martinou J.-C."/>
        </authorList>
    </citation>
    <scope>IDENTIFICATION BY MASS SPECTROMETRY</scope>
    <scope>SUBCELLULAR LOCATION</scope>
</reference>
<reference key="4">
    <citation type="journal article" date="2010" name="Cell">
        <title>A tissue-specific atlas of mouse protein phosphorylation and expression.</title>
        <authorList>
            <person name="Huttlin E.L."/>
            <person name="Jedrychowski M.P."/>
            <person name="Elias J.E."/>
            <person name="Goswami T."/>
            <person name="Rad R."/>
            <person name="Beausoleil S.A."/>
            <person name="Villen J."/>
            <person name="Haas W."/>
            <person name="Sowa M.E."/>
            <person name="Gygi S.P."/>
        </authorList>
    </citation>
    <scope>IDENTIFICATION BY MASS SPECTROMETRY [LARGE SCALE ANALYSIS]</scope>
    <source>
        <tissue>Liver</tissue>
    </source>
</reference>
<organism>
    <name type="scientific">Mus musculus</name>
    <name type="common">Mouse</name>
    <dbReference type="NCBI Taxonomy" id="10090"/>
    <lineage>
        <taxon>Eukaryota</taxon>
        <taxon>Metazoa</taxon>
        <taxon>Chordata</taxon>
        <taxon>Craniata</taxon>
        <taxon>Vertebrata</taxon>
        <taxon>Euteleostomi</taxon>
        <taxon>Mammalia</taxon>
        <taxon>Eutheria</taxon>
        <taxon>Euarchontoglires</taxon>
        <taxon>Glires</taxon>
        <taxon>Rodentia</taxon>
        <taxon>Myomorpha</taxon>
        <taxon>Muroidea</taxon>
        <taxon>Muridae</taxon>
        <taxon>Murinae</taxon>
        <taxon>Mus</taxon>
        <taxon>Mus</taxon>
    </lineage>
</organism>
<proteinExistence type="evidence at protein level"/>
<accession>Q9CW42</accession>
<accession>Q8R2L6</accession>
<protein>
    <recommendedName>
        <fullName evidence="2">Mitochondrial amidoxime-reducing component 1</fullName>
        <shortName evidence="2">mARC1</shortName>
        <ecNumber evidence="2">1.7.-.-</ecNumber>
    </recommendedName>
    <alternativeName>
        <fullName evidence="2">Molybdenum cofactor sulfurase C-terminal domain-containing protein 1</fullName>
        <shortName>MOSC domain-containing protein 1</shortName>
        <shortName>Moco sulfurase C-terminal domain-containing protein 1</shortName>
    </alternativeName>
</protein>
<evidence type="ECO:0000250" key="1"/>
<evidence type="ECO:0000250" key="2">
    <source>
        <dbReference type="UniProtKB" id="Q5VT66"/>
    </source>
</evidence>
<evidence type="ECO:0000255" key="3"/>
<evidence type="ECO:0000255" key="4">
    <source>
        <dbReference type="PROSITE-ProRule" id="PRU00670"/>
    </source>
</evidence>
<evidence type="ECO:0000305" key="5"/>
<evidence type="ECO:0000312" key="6">
    <source>
        <dbReference type="MGI" id="MGI:1913362"/>
    </source>
</evidence>
<sequence>MGAGSWALTLFGFSAFRVPGQPRSTWLGVAALGLAAVALGTVAWRRARPRRRRRLQQVGTVAQLWIYPIKSCKGLSVSEAECTAMGLRYGHLRDRFWLVINEEGNMVTARQEPRLVLISLTCEDDTLTLSAAYTKDLLLPITPPATNPLLQCRVHGLEIQGRDCGEDAAQWVSSFLKMQSCRLVHFEPHMRPRSSRQMKAVFRTKDQVAYSDASPFLVLSEASLEDLNSRLERRVKATNFRPNIVISGCGVYAEDSWNEVLIGDVELKRVMACTRCLLTTVDPDTGISDRKEPLETLKSYRLCDPSEQALYGKLPIFGQYFALENPGTIRVGDPVYLLGQ</sequence>